<organism>
    <name type="scientific">Rhizobium meliloti (strain 1021)</name>
    <name type="common">Ensifer meliloti</name>
    <name type="synonym">Sinorhizobium meliloti</name>
    <dbReference type="NCBI Taxonomy" id="266834"/>
    <lineage>
        <taxon>Bacteria</taxon>
        <taxon>Pseudomonadati</taxon>
        <taxon>Pseudomonadota</taxon>
        <taxon>Alphaproteobacteria</taxon>
        <taxon>Hyphomicrobiales</taxon>
        <taxon>Rhizobiaceae</taxon>
        <taxon>Sinorhizobium/Ensifer group</taxon>
        <taxon>Sinorhizobium</taxon>
    </lineage>
</organism>
<comment type="function">
    <text>Glycosyltransferase required for the synthesis of succinoglycan (EPS I). Needed for the addition of the sixth sugar (glucose), catalyzes the formation of a beta-1,6 linkage between the fifth and sixth sugar.</text>
</comment>
<comment type="pathway">
    <text>Glycan metabolism; exopolysaccharide biosynthesis.</text>
</comment>
<comment type="subcellular location">
    <subcellularLocation>
        <location>Cytoplasm</location>
    </subcellularLocation>
</comment>
<comment type="similarity">
    <text evidence="1">Belongs to the glycosyltransferase 2 family.</text>
</comment>
<sequence length="342" mass="37018">MTAAAPTDVCIIISAKNAADTIARAVASALAEPEAAEVVVIDDGSTDDSASVARAADDGTGRLNVVRFEENRGPAAARNHAIAISHSPLIGVLDADDFFFPGRLGQLLSQDGWDFIADNIAFIDAAQAATAHGRIDRFAPTPRLIDLVGFVEGNISRRGVRRGEIGFLKPLMRRAFLDQHGLRYNETLRLGEDYDLYARALANGARYKIIHSCGYAAVVRGNSLSGSHRTIDLKRLYEADRAILAGSRLSSDAEAAVRRHERHIRDRYELRHFLDLKNQQGFGRAFGYALTHPAALPAIIGGILADKTERFRPSGSPAPVALGGKGDVRYLLETLAVDQPQK</sequence>
<protein>
    <recommendedName>
        <fullName>Succinoglycan biosynthesis protein ExoU</fullName>
        <ecNumber>2.4.-.-</ecNumber>
    </recommendedName>
</protein>
<proteinExistence type="inferred from homology"/>
<geneLocation type="plasmid">
    <name>pSymB</name>
    <name>megaplasmid 2</name>
</geneLocation>
<name>EXOU_RHIME</name>
<gene>
    <name type="primary">exoU</name>
    <name type="ordered locus">RB1071</name>
    <name type="ORF">SMb20948</name>
</gene>
<accession>P33700</accession>
<reference key="1">
    <citation type="journal article" date="1993" name="J. Bacteriol.">
        <title>Family of glycosyl transferases needed for the synthesis of succinoglycan by Rhizobium meliloti.</title>
        <authorList>
            <person name="Glucksmann M.A."/>
            <person name="Reuber T.L."/>
            <person name="Walker G.C."/>
        </authorList>
    </citation>
    <scope>NUCLEOTIDE SEQUENCE [GENOMIC DNA]</scope>
    <source>
        <strain>1021</strain>
    </source>
</reference>
<reference key="2">
    <citation type="journal article" date="1993" name="Mol. Plant Microbe Interact.">
        <title>Analysis of the Rhizobium meliloti genes exoU, exoV, exoW, exoT, and exoI involved in exopolysaccharide biosynthesis and nodule invasion: exoU and exoW probably encode glucosyltransferases.</title>
        <authorList>
            <person name="Becker A."/>
            <person name="Kleickmann A."/>
            <person name="Kuester H."/>
            <person name="Keller M."/>
            <person name="Arnold W."/>
            <person name="Puehler A."/>
        </authorList>
    </citation>
    <scope>NUCLEOTIDE SEQUENCE [GENOMIC DNA]</scope>
    <source>
        <strain>RCR2011 / SU47</strain>
    </source>
</reference>
<reference key="3">
    <citation type="journal article" date="2001" name="Proc. Natl. Acad. Sci. U.S.A.">
        <title>The complete sequence of the 1,683-kb pSymB megaplasmid from the N2-fixing endosymbiont Sinorhizobium meliloti.</title>
        <authorList>
            <person name="Finan T.M."/>
            <person name="Weidner S."/>
            <person name="Wong K."/>
            <person name="Buhrmester J."/>
            <person name="Chain P."/>
            <person name="Vorhoelter F.J."/>
            <person name="Hernandez-Lucas I."/>
            <person name="Becker A."/>
            <person name="Cowie A."/>
            <person name="Gouzy J."/>
            <person name="Golding B."/>
            <person name="Puehler A."/>
        </authorList>
    </citation>
    <scope>NUCLEOTIDE SEQUENCE [LARGE SCALE GENOMIC DNA]</scope>
    <source>
        <strain>1021</strain>
    </source>
</reference>
<reference key="4">
    <citation type="journal article" date="2001" name="Science">
        <title>The composite genome of the legume symbiont Sinorhizobium meliloti.</title>
        <authorList>
            <person name="Galibert F."/>
            <person name="Finan T.M."/>
            <person name="Long S.R."/>
            <person name="Puehler A."/>
            <person name="Abola P."/>
            <person name="Ampe F."/>
            <person name="Barloy-Hubler F."/>
            <person name="Barnett M.J."/>
            <person name="Becker A."/>
            <person name="Boistard P."/>
            <person name="Bothe G."/>
            <person name="Boutry M."/>
            <person name="Bowser L."/>
            <person name="Buhrmester J."/>
            <person name="Cadieu E."/>
            <person name="Capela D."/>
            <person name="Chain P."/>
            <person name="Cowie A."/>
            <person name="Davis R.W."/>
            <person name="Dreano S."/>
            <person name="Federspiel N.A."/>
            <person name="Fisher R.F."/>
            <person name="Gloux S."/>
            <person name="Godrie T."/>
            <person name="Goffeau A."/>
            <person name="Golding B."/>
            <person name="Gouzy J."/>
            <person name="Gurjal M."/>
            <person name="Hernandez-Lucas I."/>
            <person name="Hong A."/>
            <person name="Huizar L."/>
            <person name="Hyman R.W."/>
            <person name="Jones T."/>
            <person name="Kahn D."/>
            <person name="Kahn M.L."/>
            <person name="Kalman S."/>
            <person name="Keating D.H."/>
            <person name="Kiss E."/>
            <person name="Komp C."/>
            <person name="Lelaure V."/>
            <person name="Masuy D."/>
            <person name="Palm C."/>
            <person name="Peck M.C."/>
            <person name="Pohl T.M."/>
            <person name="Portetelle D."/>
            <person name="Purnelle B."/>
            <person name="Ramsperger U."/>
            <person name="Surzycki R."/>
            <person name="Thebault P."/>
            <person name="Vandenbol M."/>
            <person name="Vorhoelter F.J."/>
            <person name="Weidner S."/>
            <person name="Wells D.H."/>
            <person name="Wong K."/>
            <person name="Yeh K.-C."/>
            <person name="Batut J."/>
        </authorList>
    </citation>
    <scope>NUCLEOTIDE SEQUENCE [LARGE SCALE GENOMIC DNA]</scope>
    <source>
        <strain>1021</strain>
    </source>
</reference>
<feature type="chain" id="PRO_0000059184" description="Succinoglycan biosynthesis protein ExoU">
    <location>
        <begin position="1"/>
        <end position="342"/>
    </location>
</feature>
<dbReference type="EC" id="2.4.-.-"/>
<dbReference type="EMBL" id="L20758">
    <property type="protein sequence ID" value="AAA16053.1"/>
    <property type="molecule type" value="Unassigned_DNA"/>
</dbReference>
<dbReference type="EMBL" id="Z22646">
    <property type="protein sequence ID" value="CAA80359.1"/>
    <property type="molecule type" value="Genomic_DNA"/>
</dbReference>
<dbReference type="EMBL" id="AL591985">
    <property type="protein sequence ID" value="CAC49471.1"/>
    <property type="molecule type" value="Genomic_DNA"/>
</dbReference>
<dbReference type="PIR" id="D49348">
    <property type="entry name" value="D49348"/>
</dbReference>
<dbReference type="PIR" id="G95975">
    <property type="entry name" value="G95975"/>
</dbReference>
<dbReference type="RefSeq" id="NP_437611.1">
    <property type="nucleotide sequence ID" value="NC_003078.1"/>
</dbReference>
<dbReference type="RefSeq" id="WP_010975909.1">
    <property type="nucleotide sequence ID" value="NC_003078.1"/>
</dbReference>
<dbReference type="SMR" id="P33700"/>
<dbReference type="CAZy" id="GT2">
    <property type="family name" value="Glycosyltransferase Family 2"/>
</dbReference>
<dbReference type="EnsemblBacteria" id="CAC49471">
    <property type="protein sequence ID" value="CAC49471"/>
    <property type="gene ID" value="SM_b20948"/>
</dbReference>
<dbReference type="KEGG" id="sme:SM_b20948"/>
<dbReference type="PATRIC" id="fig|266834.11.peg.6000"/>
<dbReference type="eggNOG" id="COG1215">
    <property type="taxonomic scope" value="Bacteria"/>
</dbReference>
<dbReference type="HOGENOM" id="CLU_025996_0_1_5"/>
<dbReference type="OrthoDB" id="9806521at2"/>
<dbReference type="BioCyc" id="MetaCyc:SM_B20948-MONOMER"/>
<dbReference type="UniPathway" id="UPA00631"/>
<dbReference type="Proteomes" id="UP000001976">
    <property type="component" value="Plasmid pSymB"/>
</dbReference>
<dbReference type="GO" id="GO:0005737">
    <property type="term" value="C:cytoplasm"/>
    <property type="evidence" value="ECO:0007669"/>
    <property type="project" value="UniProtKB-SubCell"/>
</dbReference>
<dbReference type="GO" id="GO:0016757">
    <property type="term" value="F:glycosyltransferase activity"/>
    <property type="evidence" value="ECO:0007669"/>
    <property type="project" value="UniProtKB-KW"/>
</dbReference>
<dbReference type="GO" id="GO:0000271">
    <property type="term" value="P:polysaccharide biosynthetic process"/>
    <property type="evidence" value="ECO:0007669"/>
    <property type="project" value="UniProtKB-KW"/>
</dbReference>
<dbReference type="CDD" id="cd00761">
    <property type="entry name" value="Glyco_tranf_GTA_type"/>
    <property type="match status" value="1"/>
</dbReference>
<dbReference type="Gene3D" id="3.90.550.10">
    <property type="entry name" value="Spore Coat Polysaccharide Biosynthesis Protein SpsA, Chain A"/>
    <property type="match status" value="1"/>
</dbReference>
<dbReference type="InterPro" id="IPR001173">
    <property type="entry name" value="Glyco_trans_2-like"/>
</dbReference>
<dbReference type="InterPro" id="IPR050834">
    <property type="entry name" value="Glycosyltransf_2"/>
</dbReference>
<dbReference type="InterPro" id="IPR029044">
    <property type="entry name" value="Nucleotide-diphossugar_trans"/>
</dbReference>
<dbReference type="PANTHER" id="PTHR43685">
    <property type="entry name" value="GLYCOSYLTRANSFERASE"/>
    <property type="match status" value="1"/>
</dbReference>
<dbReference type="PANTHER" id="PTHR43685:SF11">
    <property type="entry name" value="GLYCOSYLTRANSFERASE TAGX-RELATED"/>
    <property type="match status" value="1"/>
</dbReference>
<dbReference type="Pfam" id="PF00535">
    <property type="entry name" value="Glycos_transf_2"/>
    <property type="match status" value="1"/>
</dbReference>
<dbReference type="SUPFAM" id="SSF53448">
    <property type="entry name" value="Nucleotide-diphospho-sugar transferases"/>
    <property type="match status" value="1"/>
</dbReference>
<evidence type="ECO:0000305" key="1"/>
<keyword id="KW-0963">Cytoplasm</keyword>
<keyword id="KW-0270">Exopolysaccharide synthesis</keyword>
<keyword id="KW-0328">Glycosyltransferase</keyword>
<keyword id="KW-0614">Plasmid</keyword>
<keyword id="KW-1185">Reference proteome</keyword>
<keyword id="KW-0808">Transferase</keyword>